<name>1433B_XENTR</name>
<reference key="1">
    <citation type="submission" date="2006-03" db="EMBL/GenBank/DDBJ databases">
        <authorList>
            <consortium name="Sanger Xenopus tropicalis EST/cDNA project"/>
        </authorList>
    </citation>
    <scope>NUCLEOTIDE SEQUENCE [LARGE SCALE MRNA]</scope>
    <source>
        <tissue>Tadpole</tissue>
    </source>
</reference>
<reference key="2">
    <citation type="submission" date="2004-10" db="EMBL/GenBank/DDBJ databases">
        <authorList>
            <consortium name="NIH - Xenopus Gene Collection (XGC) project"/>
        </authorList>
    </citation>
    <scope>NUCLEOTIDE SEQUENCE [LARGE SCALE MRNA]</scope>
    <source>
        <tissue>Embryo</tissue>
    </source>
</reference>
<dbReference type="EMBL" id="CR760847">
    <property type="protein sequence ID" value="CAJ82973.1"/>
    <property type="molecule type" value="mRNA"/>
</dbReference>
<dbReference type="EMBL" id="BC084514">
    <property type="protein sequence ID" value="AAH84514.1"/>
    <property type="molecule type" value="mRNA"/>
</dbReference>
<dbReference type="RefSeq" id="NP_001011116.1">
    <property type="nucleotide sequence ID" value="NM_001011116.1"/>
</dbReference>
<dbReference type="SMR" id="Q5XGC8"/>
<dbReference type="FunCoup" id="Q5XGC8">
    <property type="interactions" value="3347"/>
</dbReference>
<dbReference type="STRING" id="8364.ENSXETP00000035071"/>
<dbReference type="PaxDb" id="8364-ENSXETP00000049381"/>
<dbReference type="GeneID" id="496529"/>
<dbReference type="KEGG" id="xtr:496529"/>
<dbReference type="AGR" id="Xenbase:XB-GENE-1006026"/>
<dbReference type="CTD" id="7529"/>
<dbReference type="Xenbase" id="XB-GENE-1006026">
    <property type="gene designation" value="ywhab"/>
</dbReference>
<dbReference type="eggNOG" id="KOG0841">
    <property type="taxonomic scope" value="Eukaryota"/>
</dbReference>
<dbReference type="HOGENOM" id="CLU_058290_1_0_1"/>
<dbReference type="InParanoid" id="Q5XGC8"/>
<dbReference type="OMA" id="AECKVFY"/>
<dbReference type="OrthoDB" id="10260625at2759"/>
<dbReference type="PhylomeDB" id="Q5XGC8"/>
<dbReference type="Reactome" id="R-XTR-111447">
    <property type="pathway name" value="Activation of BAD and translocation to mitochondria"/>
</dbReference>
<dbReference type="Reactome" id="R-XTR-165159">
    <property type="pathway name" value="MTOR signalling"/>
</dbReference>
<dbReference type="Reactome" id="R-XTR-2028269">
    <property type="pathway name" value="Signaling by Hippo"/>
</dbReference>
<dbReference type="Reactome" id="R-XTR-392517">
    <property type="pathway name" value="Rap1 signalling"/>
</dbReference>
<dbReference type="Reactome" id="R-XTR-450385">
    <property type="pathway name" value="Butyrate Response Factor 1 (BRF1) binds and destabilizes mRNA"/>
</dbReference>
<dbReference type="Reactome" id="R-XTR-450513">
    <property type="pathway name" value="Tristetraprolin (TTP, ZFP36) binds and destabilizes mRNA"/>
</dbReference>
<dbReference type="Reactome" id="R-XTR-5628897">
    <property type="pathway name" value="TP53 Regulates Metabolic Genes"/>
</dbReference>
<dbReference type="Reactome" id="R-XTR-5673000">
    <property type="pathway name" value="RAF activation"/>
</dbReference>
<dbReference type="Reactome" id="R-XTR-5675221">
    <property type="pathway name" value="Negative regulation of MAPK pathway"/>
</dbReference>
<dbReference type="Reactome" id="R-XTR-9614399">
    <property type="pathway name" value="Regulation of localization of FOXO transcription factors"/>
</dbReference>
<dbReference type="Proteomes" id="UP000008143">
    <property type="component" value="Chromosome 10"/>
</dbReference>
<dbReference type="Bgee" id="ENSXETG00000022830">
    <property type="expression patterns" value="Expressed in brain and 19 other cell types or tissues"/>
</dbReference>
<dbReference type="GO" id="GO:0005737">
    <property type="term" value="C:cytoplasm"/>
    <property type="evidence" value="ECO:0007669"/>
    <property type="project" value="UniProtKB-SubCell"/>
</dbReference>
<dbReference type="GO" id="GO:0003401">
    <property type="term" value="P:axis elongation"/>
    <property type="evidence" value="ECO:0000315"/>
    <property type="project" value="Xenbase"/>
</dbReference>
<dbReference type="GO" id="GO:0001702">
    <property type="term" value="P:gastrulation with mouth forming second"/>
    <property type="evidence" value="ECO:0000315"/>
    <property type="project" value="Xenbase"/>
</dbReference>
<dbReference type="FunFam" id="1.20.190.20:FF:000001">
    <property type="entry name" value="14-3-3 gamma 1"/>
    <property type="match status" value="1"/>
</dbReference>
<dbReference type="Gene3D" id="1.20.190.20">
    <property type="entry name" value="14-3-3 domain"/>
    <property type="match status" value="1"/>
</dbReference>
<dbReference type="InterPro" id="IPR000308">
    <property type="entry name" value="14-3-3"/>
</dbReference>
<dbReference type="InterPro" id="IPR023409">
    <property type="entry name" value="14-3-3_CS"/>
</dbReference>
<dbReference type="InterPro" id="IPR036815">
    <property type="entry name" value="14-3-3_dom_sf"/>
</dbReference>
<dbReference type="InterPro" id="IPR023410">
    <property type="entry name" value="14-3-3_domain"/>
</dbReference>
<dbReference type="PANTHER" id="PTHR18860">
    <property type="entry name" value="14-3-3 PROTEIN"/>
    <property type="match status" value="1"/>
</dbReference>
<dbReference type="Pfam" id="PF00244">
    <property type="entry name" value="14-3-3"/>
    <property type="match status" value="1"/>
</dbReference>
<dbReference type="PIRSF" id="PIRSF000868">
    <property type="entry name" value="14-3-3"/>
    <property type="match status" value="1"/>
</dbReference>
<dbReference type="PRINTS" id="PR00305">
    <property type="entry name" value="1433ZETA"/>
</dbReference>
<dbReference type="SMART" id="SM00101">
    <property type="entry name" value="14_3_3"/>
    <property type="match status" value="1"/>
</dbReference>
<dbReference type="SUPFAM" id="SSF48445">
    <property type="entry name" value="14-3-3 protein"/>
    <property type="match status" value="1"/>
</dbReference>
<dbReference type="PROSITE" id="PS00796">
    <property type="entry name" value="1433_1"/>
    <property type="match status" value="1"/>
</dbReference>
<dbReference type="PROSITE" id="PS00797">
    <property type="entry name" value="1433_2"/>
    <property type="match status" value="1"/>
</dbReference>
<comment type="function">
    <text evidence="1">Adapter protein implicated in the regulation of a large spectrum of both general and specialized signaling pathways. Binds to a large number of partners, usually by recognition of a phosphoserine or phosphothreonine motif. Binding generally results in the modulation of the activity of the binding partner (By similarity).</text>
</comment>
<comment type="subunit">
    <text evidence="1">Homodimer, and heterodimer with other family members.</text>
</comment>
<comment type="subcellular location">
    <subcellularLocation>
        <location evidence="1">Cytoplasm</location>
    </subcellularLocation>
</comment>
<comment type="similarity">
    <text evidence="2">Belongs to the 14-3-3 family.</text>
</comment>
<feature type="chain" id="PRO_0000058600" description="14-3-3 protein beta/alpha">
    <location>
        <begin position="1"/>
        <end position="244"/>
    </location>
</feature>
<feature type="site" description="Interaction with phosphoserine on interacting protein" evidence="1">
    <location>
        <position position="56"/>
    </location>
</feature>
<feature type="site" description="Interaction with phosphoserine on interacting protein" evidence="1">
    <location>
        <position position="127"/>
    </location>
</feature>
<feature type="modified residue" description="N-acetylmethionine" evidence="1">
    <location>
        <position position="1"/>
    </location>
</feature>
<organism>
    <name type="scientific">Xenopus tropicalis</name>
    <name type="common">Western clawed frog</name>
    <name type="synonym">Silurana tropicalis</name>
    <dbReference type="NCBI Taxonomy" id="8364"/>
    <lineage>
        <taxon>Eukaryota</taxon>
        <taxon>Metazoa</taxon>
        <taxon>Chordata</taxon>
        <taxon>Craniata</taxon>
        <taxon>Vertebrata</taxon>
        <taxon>Euteleostomi</taxon>
        <taxon>Amphibia</taxon>
        <taxon>Batrachia</taxon>
        <taxon>Anura</taxon>
        <taxon>Pipoidea</taxon>
        <taxon>Pipidae</taxon>
        <taxon>Xenopodinae</taxon>
        <taxon>Xenopus</taxon>
        <taxon>Silurana</taxon>
    </lineage>
</organism>
<proteinExistence type="evidence at transcript level"/>
<sequence length="244" mass="27721">MDKSELVQKAKLSEQAERYDDMAASMKAVTELGAELSNEERNLLSVAYKNVVGARRSSWRVISSIEQKTEGNDKRQQMAREYREKVETELQDICKDVLGLLDKYLVPNATPPESKVFYLKMKGDYYRYLSEVASGDSKQETVTCSQQAYQEAFEISKSEMQPTHPIRLGLALNFSVFYYEILNSPEKACSLAKSAFDEAIAELDTLNEESYKDSTLIMQLLRDNLTLWTSENQGEEADNAEADN</sequence>
<protein>
    <recommendedName>
        <fullName>14-3-3 protein beta/alpha</fullName>
    </recommendedName>
</protein>
<gene>
    <name type="primary">ywhab</name>
    <name type="ORF">TTpA010k20.1</name>
</gene>
<accession>Q5XGC8</accession>
<accession>Q28HK2</accession>
<evidence type="ECO:0000250" key="1"/>
<evidence type="ECO:0000305" key="2"/>
<keyword id="KW-0007">Acetylation</keyword>
<keyword id="KW-0963">Cytoplasm</keyword>
<keyword id="KW-1185">Reference proteome</keyword>